<sequence>MHCPFCFAVDTKVIDSRLVGEGSSVRRRRQCLVCNERFTTFEVAELVMPRVVKSNDVREPFNEEKLRSGMLRALEKRPVSSDDVEMAINHIKSQLRATGEREVPSKMIGNLVMEQLKKLDKVAYIRFASVYRSFEDIKEFGEEIARLED</sequence>
<gene>
    <name evidence="1" type="primary">nrdR</name>
    <name type="ordered locus">ECP_0472</name>
</gene>
<dbReference type="EMBL" id="CP000247">
    <property type="protein sequence ID" value="ABG68503.1"/>
    <property type="molecule type" value="Genomic_DNA"/>
</dbReference>
<dbReference type="RefSeq" id="WP_000543535.1">
    <property type="nucleotide sequence ID" value="NC_008253.1"/>
</dbReference>
<dbReference type="SMR" id="Q0TKM8"/>
<dbReference type="GeneID" id="93777047"/>
<dbReference type="KEGG" id="ecp:ECP_0472"/>
<dbReference type="HOGENOM" id="CLU_108412_0_0_6"/>
<dbReference type="Proteomes" id="UP000009182">
    <property type="component" value="Chromosome"/>
</dbReference>
<dbReference type="GO" id="GO:0005524">
    <property type="term" value="F:ATP binding"/>
    <property type="evidence" value="ECO:0007669"/>
    <property type="project" value="UniProtKB-KW"/>
</dbReference>
<dbReference type="GO" id="GO:0003677">
    <property type="term" value="F:DNA binding"/>
    <property type="evidence" value="ECO:0007669"/>
    <property type="project" value="UniProtKB-KW"/>
</dbReference>
<dbReference type="GO" id="GO:0008270">
    <property type="term" value="F:zinc ion binding"/>
    <property type="evidence" value="ECO:0007669"/>
    <property type="project" value="UniProtKB-UniRule"/>
</dbReference>
<dbReference type="GO" id="GO:0045892">
    <property type="term" value="P:negative regulation of DNA-templated transcription"/>
    <property type="evidence" value="ECO:0007669"/>
    <property type="project" value="UniProtKB-UniRule"/>
</dbReference>
<dbReference type="HAMAP" id="MF_00440">
    <property type="entry name" value="NrdR"/>
    <property type="match status" value="1"/>
</dbReference>
<dbReference type="InterPro" id="IPR005144">
    <property type="entry name" value="ATP-cone_dom"/>
</dbReference>
<dbReference type="InterPro" id="IPR055173">
    <property type="entry name" value="NrdR-like_N"/>
</dbReference>
<dbReference type="InterPro" id="IPR003796">
    <property type="entry name" value="RNR_NrdR-like"/>
</dbReference>
<dbReference type="NCBIfam" id="TIGR00244">
    <property type="entry name" value="transcriptional regulator NrdR"/>
    <property type="match status" value="1"/>
</dbReference>
<dbReference type="PANTHER" id="PTHR30455">
    <property type="entry name" value="TRANSCRIPTIONAL REPRESSOR NRDR"/>
    <property type="match status" value="1"/>
</dbReference>
<dbReference type="PANTHER" id="PTHR30455:SF2">
    <property type="entry name" value="TRANSCRIPTIONAL REPRESSOR NRDR"/>
    <property type="match status" value="1"/>
</dbReference>
<dbReference type="Pfam" id="PF03477">
    <property type="entry name" value="ATP-cone"/>
    <property type="match status" value="1"/>
</dbReference>
<dbReference type="Pfam" id="PF22811">
    <property type="entry name" value="Zn_ribbon_NrdR"/>
    <property type="match status" value="1"/>
</dbReference>
<dbReference type="PROSITE" id="PS51161">
    <property type="entry name" value="ATP_CONE"/>
    <property type="match status" value="1"/>
</dbReference>
<reference key="1">
    <citation type="journal article" date="2006" name="Mol. Microbiol.">
        <title>Role of pathogenicity island-associated integrases in the genome plasticity of uropathogenic Escherichia coli strain 536.</title>
        <authorList>
            <person name="Hochhut B."/>
            <person name="Wilde C."/>
            <person name="Balling G."/>
            <person name="Middendorf B."/>
            <person name="Dobrindt U."/>
            <person name="Brzuszkiewicz E."/>
            <person name="Gottschalk G."/>
            <person name="Carniel E."/>
            <person name="Hacker J."/>
        </authorList>
    </citation>
    <scope>NUCLEOTIDE SEQUENCE [LARGE SCALE GENOMIC DNA]</scope>
    <source>
        <strain>536 / UPEC</strain>
    </source>
</reference>
<organism>
    <name type="scientific">Escherichia coli O6:K15:H31 (strain 536 / UPEC)</name>
    <dbReference type="NCBI Taxonomy" id="362663"/>
    <lineage>
        <taxon>Bacteria</taxon>
        <taxon>Pseudomonadati</taxon>
        <taxon>Pseudomonadota</taxon>
        <taxon>Gammaproteobacteria</taxon>
        <taxon>Enterobacterales</taxon>
        <taxon>Enterobacteriaceae</taxon>
        <taxon>Escherichia</taxon>
    </lineage>
</organism>
<proteinExistence type="inferred from homology"/>
<keyword id="KW-0067">ATP-binding</keyword>
<keyword id="KW-0238">DNA-binding</keyword>
<keyword id="KW-0479">Metal-binding</keyword>
<keyword id="KW-0547">Nucleotide-binding</keyword>
<keyword id="KW-0678">Repressor</keyword>
<keyword id="KW-0804">Transcription</keyword>
<keyword id="KW-0805">Transcription regulation</keyword>
<keyword id="KW-0862">Zinc</keyword>
<keyword id="KW-0863">Zinc-finger</keyword>
<evidence type="ECO:0000255" key="1">
    <source>
        <dbReference type="HAMAP-Rule" id="MF_00440"/>
    </source>
</evidence>
<comment type="function">
    <text evidence="1">Negatively regulates transcription of bacterial ribonucleotide reductase nrd genes and operons by binding to NrdR-boxes.</text>
</comment>
<comment type="cofactor">
    <cofactor evidence="1">
        <name>Zn(2+)</name>
        <dbReference type="ChEBI" id="CHEBI:29105"/>
    </cofactor>
    <text evidence="1">Binds 1 zinc ion.</text>
</comment>
<comment type="similarity">
    <text evidence="1">Belongs to the NrdR family.</text>
</comment>
<accession>Q0TKM8</accession>
<protein>
    <recommendedName>
        <fullName evidence="1">Transcriptional repressor NrdR</fullName>
    </recommendedName>
</protein>
<name>NRDR_ECOL5</name>
<feature type="chain" id="PRO_0000264176" description="Transcriptional repressor NrdR">
    <location>
        <begin position="1"/>
        <end position="149"/>
    </location>
</feature>
<feature type="domain" description="ATP-cone" evidence="1">
    <location>
        <begin position="49"/>
        <end position="139"/>
    </location>
</feature>
<feature type="zinc finger region" evidence="1">
    <location>
        <begin position="3"/>
        <end position="34"/>
    </location>
</feature>